<proteinExistence type="inferred from homology"/>
<protein>
    <recommendedName>
        <fullName>Synaptobrevin homolog YKT6</fullName>
    </recommendedName>
</protein>
<sequence length="200" mass="22952">MKIYYIGILRIGGEKALELTSARDLSQFSFFERNGVSQFMTFFSETVSQRTQAGQRQSIEEGNYIGHTYTRSEGLACVIITDKEYPVRPAYTLINKILEEYLSLHPQKDWANISATNASFNYDNLEHYIKKYQDPSQADSIMKVQQELDETKIVLHKTIESVLQRGEKLDSLVDKSEALSSSSRMFYKQAKKTNSCCIIM</sequence>
<keyword id="KW-1003">Cell membrane</keyword>
<keyword id="KW-0175">Coiled coil</keyword>
<keyword id="KW-0449">Lipoprotein</keyword>
<keyword id="KW-0472">Membrane</keyword>
<keyword id="KW-0488">Methylation</keyword>
<keyword id="KW-0564">Palmitate</keyword>
<keyword id="KW-0636">Prenylation</keyword>
<keyword id="KW-1185">Reference proteome</keyword>
<dbReference type="EMBL" id="CR382136">
    <property type="protein sequence ID" value="CAG86956.1"/>
    <property type="molecule type" value="Genomic_DNA"/>
</dbReference>
<dbReference type="RefSeq" id="XP_458810.1">
    <property type="nucleotide sequence ID" value="XM_458810.1"/>
</dbReference>
<dbReference type="SMR" id="Q6BSL0"/>
<dbReference type="FunCoup" id="Q6BSL0">
    <property type="interactions" value="1315"/>
</dbReference>
<dbReference type="STRING" id="284592.Q6BSL0"/>
<dbReference type="GeneID" id="2901584"/>
<dbReference type="KEGG" id="dha:DEHA2D08052g"/>
<dbReference type="VEuPathDB" id="FungiDB:DEHA2D08052g"/>
<dbReference type="eggNOG" id="KOG0861">
    <property type="taxonomic scope" value="Eukaryota"/>
</dbReference>
<dbReference type="HOGENOM" id="CLU_074848_0_1_1"/>
<dbReference type="InParanoid" id="Q6BSL0"/>
<dbReference type="OMA" id="HYIGIIR"/>
<dbReference type="OrthoDB" id="27923at2759"/>
<dbReference type="Proteomes" id="UP000000599">
    <property type="component" value="Chromosome D"/>
</dbReference>
<dbReference type="GO" id="GO:0000421">
    <property type="term" value="C:autophagosome membrane"/>
    <property type="evidence" value="ECO:0007669"/>
    <property type="project" value="EnsemblFungi"/>
</dbReference>
<dbReference type="GO" id="GO:0005768">
    <property type="term" value="C:endosome"/>
    <property type="evidence" value="ECO:0007669"/>
    <property type="project" value="EnsemblFungi"/>
</dbReference>
<dbReference type="GO" id="GO:0000324">
    <property type="term" value="C:fungal-type vacuole"/>
    <property type="evidence" value="ECO:0007669"/>
    <property type="project" value="EnsemblFungi"/>
</dbReference>
<dbReference type="GO" id="GO:0005794">
    <property type="term" value="C:Golgi apparatus"/>
    <property type="evidence" value="ECO:0007669"/>
    <property type="project" value="EnsemblFungi"/>
</dbReference>
<dbReference type="GO" id="GO:0005886">
    <property type="term" value="C:plasma membrane"/>
    <property type="evidence" value="ECO:0007669"/>
    <property type="project" value="UniProtKB-SubCell"/>
</dbReference>
<dbReference type="GO" id="GO:0031201">
    <property type="term" value="C:SNARE complex"/>
    <property type="evidence" value="ECO:0007669"/>
    <property type="project" value="EnsemblFungi"/>
</dbReference>
<dbReference type="GO" id="GO:0016409">
    <property type="term" value="F:palmitoyltransferase activity"/>
    <property type="evidence" value="ECO:0007669"/>
    <property type="project" value="EnsemblFungi"/>
</dbReference>
<dbReference type="GO" id="GO:0005484">
    <property type="term" value="F:SNAP receptor activity"/>
    <property type="evidence" value="ECO:0007669"/>
    <property type="project" value="EnsemblFungi"/>
</dbReference>
<dbReference type="GO" id="GO:0061909">
    <property type="term" value="P:autophagosome-lysosome fusion"/>
    <property type="evidence" value="ECO:0007669"/>
    <property type="project" value="EnsemblFungi"/>
</dbReference>
<dbReference type="GO" id="GO:0006888">
    <property type="term" value="P:endoplasmic reticulum to Golgi vesicle-mediated transport"/>
    <property type="evidence" value="ECO:0007669"/>
    <property type="project" value="EnsemblFungi"/>
</dbReference>
<dbReference type="GO" id="GO:0006891">
    <property type="term" value="P:intra-Golgi vesicle-mediated transport"/>
    <property type="evidence" value="ECO:0007669"/>
    <property type="project" value="EnsemblFungi"/>
</dbReference>
<dbReference type="GO" id="GO:0006886">
    <property type="term" value="P:intracellular protein transport"/>
    <property type="evidence" value="ECO:0007669"/>
    <property type="project" value="EnsemblFungi"/>
</dbReference>
<dbReference type="GO" id="GO:0042144">
    <property type="term" value="P:vacuole fusion, non-autophagic"/>
    <property type="evidence" value="ECO:0007669"/>
    <property type="project" value="EnsemblFungi"/>
</dbReference>
<dbReference type="CDD" id="cd14824">
    <property type="entry name" value="Longin"/>
    <property type="match status" value="1"/>
</dbReference>
<dbReference type="CDD" id="cd15867">
    <property type="entry name" value="R-SNARE_YKT6"/>
    <property type="match status" value="1"/>
</dbReference>
<dbReference type="FunFam" id="3.30.450.50:FF:000020">
    <property type="entry name" value="Synaptobrevin homolog YKT6"/>
    <property type="match status" value="1"/>
</dbReference>
<dbReference type="FunFam" id="1.20.5.110:FF:000020">
    <property type="entry name" value="synaptobrevin homolog YKT6"/>
    <property type="match status" value="1"/>
</dbReference>
<dbReference type="Gene3D" id="1.20.5.110">
    <property type="match status" value="1"/>
</dbReference>
<dbReference type="Gene3D" id="3.30.450.50">
    <property type="entry name" value="Longin domain"/>
    <property type="match status" value="1"/>
</dbReference>
<dbReference type="InterPro" id="IPR011012">
    <property type="entry name" value="Longin-like_dom_sf"/>
</dbReference>
<dbReference type="InterPro" id="IPR010908">
    <property type="entry name" value="Longin_dom"/>
</dbReference>
<dbReference type="InterPro" id="IPR045848">
    <property type="entry name" value="R-SNARE_YKT6"/>
</dbReference>
<dbReference type="InterPro" id="IPR001388">
    <property type="entry name" value="Synaptobrevin-like"/>
</dbReference>
<dbReference type="InterPro" id="IPR042855">
    <property type="entry name" value="V_SNARE_CC"/>
</dbReference>
<dbReference type="PANTHER" id="PTHR45806">
    <property type="entry name" value="SYNAPTOBREVIN HOMOLOG YKT6"/>
    <property type="match status" value="1"/>
</dbReference>
<dbReference type="PANTHER" id="PTHR45806:SF1">
    <property type="entry name" value="SYNAPTOBREVIN HOMOLOG YKT6"/>
    <property type="match status" value="1"/>
</dbReference>
<dbReference type="Pfam" id="PF13774">
    <property type="entry name" value="Longin"/>
    <property type="match status" value="1"/>
</dbReference>
<dbReference type="Pfam" id="PF00957">
    <property type="entry name" value="Synaptobrevin"/>
    <property type="match status" value="1"/>
</dbReference>
<dbReference type="PRINTS" id="PR00219">
    <property type="entry name" value="SYNAPTOBREVN"/>
</dbReference>
<dbReference type="SMART" id="SM01270">
    <property type="entry name" value="Longin"/>
    <property type="match status" value="1"/>
</dbReference>
<dbReference type="SUPFAM" id="SSF58038">
    <property type="entry name" value="SNARE fusion complex"/>
    <property type="match status" value="1"/>
</dbReference>
<dbReference type="SUPFAM" id="SSF64356">
    <property type="entry name" value="SNARE-like"/>
    <property type="match status" value="1"/>
</dbReference>
<dbReference type="PROSITE" id="PS50859">
    <property type="entry name" value="LONGIN"/>
    <property type="match status" value="1"/>
</dbReference>
<dbReference type="PROSITE" id="PS00417">
    <property type="entry name" value="SYNAPTOBREVIN"/>
    <property type="match status" value="1"/>
</dbReference>
<dbReference type="PROSITE" id="PS50892">
    <property type="entry name" value="V_SNARE"/>
    <property type="match status" value="1"/>
</dbReference>
<name>YKT6_DEBHA</name>
<reference key="1">
    <citation type="journal article" date="2004" name="Nature">
        <title>Genome evolution in yeasts.</title>
        <authorList>
            <person name="Dujon B."/>
            <person name="Sherman D."/>
            <person name="Fischer G."/>
            <person name="Durrens P."/>
            <person name="Casaregola S."/>
            <person name="Lafontaine I."/>
            <person name="de Montigny J."/>
            <person name="Marck C."/>
            <person name="Neuveglise C."/>
            <person name="Talla E."/>
            <person name="Goffard N."/>
            <person name="Frangeul L."/>
            <person name="Aigle M."/>
            <person name="Anthouard V."/>
            <person name="Babour A."/>
            <person name="Barbe V."/>
            <person name="Barnay S."/>
            <person name="Blanchin S."/>
            <person name="Beckerich J.-M."/>
            <person name="Beyne E."/>
            <person name="Bleykasten C."/>
            <person name="Boisrame A."/>
            <person name="Boyer J."/>
            <person name="Cattolico L."/>
            <person name="Confanioleri F."/>
            <person name="de Daruvar A."/>
            <person name="Despons L."/>
            <person name="Fabre E."/>
            <person name="Fairhead C."/>
            <person name="Ferry-Dumazet H."/>
            <person name="Groppi A."/>
            <person name="Hantraye F."/>
            <person name="Hennequin C."/>
            <person name="Jauniaux N."/>
            <person name="Joyet P."/>
            <person name="Kachouri R."/>
            <person name="Kerrest A."/>
            <person name="Koszul R."/>
            <person name="Lemaire M."/>
            <person name="Lesur I."/>
            <person name="Ma L."/>
            <person name="Muller H."/>
            <person name="Nicaud J.-M."/>
            <person name="Nikolski M."/>
            <person name="Oztas S."/>
            <person name="Ozier-Kalogeropoulos O."/>
            <person name="Pellenz S."/>
            <person name="Potier S."/>
            <person name="Richard G.-F."/>
            <person name="Straub M.-L."/>
            <person name="Suleau A."/>
            <person name="Swennen D."/>
            <person name="Tekaia F."/>
            <person name="Wesolowski-Louvel M."/>
            <person name="Westhof E."/>
            <person name="Wirth B."/>
            <person name="Zeniou-Meyer M."/>
            <person name="Zivanovic Y."/>
            <person name="Bolotin-Fukuhara M."/>
            <person name="Thierry A."/>
            <person name="Bouchier C."/>
            <person name="Caudron B."/>
            <person name="Scarpelli C."/>
            <person name="Gaillardin C."/>
            <person name="Weissenbach J."/>
            <person name="Wincker P."/>
            <person name="Souciet J.-L."/>
        </authorList>
    </citation>
    <scope>NUCLEOTIDE SEQUENCE [LARGE SCALE GENOMIC DNA]</scope>
    <source>
        <strain>ATCC 36239 / CBS 767 / BCRC 21394 / JCM 1990 / NBRC 0083 / IGC 2968</strain>
    </source>
</reference>
<accession>Q6BSL0</accession>
<evidence type="ECO:0000250" key="1"/>
<evidence type="ECO:0000255" key="2">
    <source>
        <dbReference type="PROSITE-ProRule" id="PRU00231"/>
    </source>
</evidence>
<evidence type="ECO:0000255" key="3">
    <source>
        <dbReference type="PROSITE-ProRule" id="PRU00290"/>
    </source>
</evidence>
<evidence type="ECO:0000305" key="4"/>
<organism>
    <name type="scientific">Debaryomyces hansenii (strain ATCC 36239 / CBS 767 / BCRC 21394 / JCM 1990 / NBRC 0083 / IGC 2968)</name>
    <name type="common">Yeast</name>
    <name type="synonym">Torulaspora hansenii</name>
    <dbReference type="NCBI Taxonomy" id="284592"/>
    <lineage>
        <taxon>Eukaryota</taxon>
        <taxon>Fungi</taxon>
        <taxon>Dikarya</taxon>
        <taxon>Ascomycota</taxon>
        <taxon>Saccharomycotina</taxon>
        <taxon>Pichiomycetes</taxon>
        <taxon>Debaryomycetaceae</taxon>
        <taxon>Debaryomyces</taxon>
    </lineage>
</organism>
<gene>
    <name type="primary">YKT6</name>
    <name type="ordered locus">DEHA2D08052g</name>
</gene>
<feature type="chain" id="PRO_0000206776" description="Synaptobrevin homolog YKT6">
    <location>
        <begin position="1"/>
        <end position="197"/>
    </location>
</feature>
<feature type="propeptide" id="PRO_0000396671" description="Removed in mature form" evidence="1">
    <location>
        <begin position="198"/>
        <end position="200"/>
    </location>
</feature>
<feature type="domain" description="Longin" evidence="2">
    <location>
        <begin position="7"/>
        <end position="126"/>
    </location>
</feature>
<feature type="domain" description="v-SNARE coiled-coil homology" evidence="3">
    <location>
        <begin position="140"/>
        <end position="200"/>
    </location>
</feature>
<feature type="modified residue" description="Cysteine methyl ester" evidence="1">
    <location>
        <position position="197"/>
    </location>
</feature>
<feature type="lipid moiety-binding region" description="S-palmitoyl cysteine" evidence="1">
    <location>
        <position position="196"/>
    </location>
</feature>
<feature type="lipid moiety-binding region" description="S-farnesyl cysteine" evidence="1">
    <location>
        <position position="197"/>
    </location>
</feature>
<comment type="subcellular location">
    <subcellularLocation>
        <location evidence="4">Cell membrane</location>
        <topology evidence="4">Lipid-anchor</topology>
        <orientation evidence="4">Cytoplasmic side</orientation>
    </subcellularLocation>
</comment>
<comment type="similarity">
    <text evidence="4">Belongs to the synaptobrevin family.</text>
</comment>